<comment type="function">
    <text evidence="1">ATP-dependent specificity component of the Clp protease. It directs the protease to specific substrates. Can perform chaperone functions in the absence of ClpP.</text>
</comment>
<comment type="subunit">
    <text evidence="1">Component of the ClpX-ClpP complex. Forms a hexameric ring that, in the presence of ATP, binds to fourteen ClpP subunits assembled into a disk-like structure with a central cavity, resembling the structure of eukaryotic proteasomes.</text>
</comment>
<comment type="similarity">
    <text evidence="1">Belongs to the ClpX chaperone family.</text>
</comment>
<gene>
    <name evidence="1" type="primary">clpX</name>
    <name type="ordered locus">NMCC_1284</name>
</gene>
<sequence length="414" mass="45069">MSNENRTCSFCGKSKSHVKHLIEGENAFICDECVSNCIEILHEDGNDGTPSESAGGEPEESGKLPTPAEIVANLNDHVIGQEQAKKALAVSVYNHYKRLRHPKAGANVELSKSNILLIGPTGSGKTLLAQSLARKLDVPFVMADATTLTEAGYVGEDVEQIITKLLGKCDFDVEKAQRGIVYIDEIDKISRKGDNPSITRDVSGEGVQQALLKLIEGTVASVPPQGGRKHPNQEFINVDTTNILFICGGAFAGLEKVIRQRTEKGGIGFGASVHSKDENADITKLFGIVEPEDLIKFGLIPELIGRLPVIATLEELDEDALINILTEPKNALVKQYQALFGMENVELEFEEGALRSIARQAMERKTGARGLRSIVERCLLDTMYRLPDLQGLKKVVVGKAVIEEGREPELVFES</sequence>
<organism>
    <name type="scientific">Neisseria meningitidis serogroup C (strain 053442)</name>
    <dbReference type="NCBI Taxonomy" id="374833"/>
    <lineage>
        <taxon>Bacteria</taxon>
        <taxon>Pseudomonadati</taxon>
        <taxon>Pseudomonadota</taxon>
        <taxon>Betaproteobacteria</taxon>
        <taxon>Neisseriales</taxon>
        <taxon>Neisseriaceae</taxon>
        <taxon>Neisseria</taxon>
    </lineage>
</organism>
<feature type="chain" id="PRO_1000077165" description="ATP-dependent Clp protease ATP-binding subunit ClpX">
    <location>
        <begin position="1"/>
        <end position="414"/>
    </location>
</feature>
<feature type="domain" description="ClpX-type ZB" evidence="2">
    <location>
        <begin position="1"/>
        <end position="49"/>
    </location>
</feature>
<feature type="region of interest" description="Disordered" evidence="3">
    <location>
        <begin position="44"/>
        <end position="65"/>
    </location>
</feature>
<feature type="binding site" evidence="2">
    <location>
        <position position="8"/>
    </location>
    <ligand>
        <name>Zn(2+)</name>
        <dbReference type="ChEBI" id="CHEBI:29105"/>
    </ligand>
</feature>
<feature type="binding site" evidence="2">
    <location>
        <position position="11"/>
    </location>
    <ligand>
        <name>Zn(2+)</name>
        <dbReference type="ChEBI" id="CHEBI:29105"/>
    </ligand>
</feature>
<feature type="binding site" evidence="2">
    <location>
        <position position="30"/>
    </location>
    <ligand>
        <name>Zn(2+)</name>
        <dbReference type="ChEBI" id="CHEBI:29105"/>
    </ligand>
</feature>
<feature type="binding site" evidence="2">
    <location>
        <position position="33"/>
    </location>
    <ligand>
        <name>Zn(2+)</name>
        <dbReference type="ChEBI" id="CHEBI:29105"/>
    </ligand>
</feature>
<feature type="binding site" evidence="1">
    <location>
        <begin position="120"/>
        <end position="127"/>
    </location>
    <ligand>
        <name>ATP</name>
        <dbReference type="ChEBI" id="CHEBI:30616"/>
    </ligand>
</feature>
<proteinExistence type="inferred from homology"/>
<protein>
    <recommendedName>
        <fullName evidence="1">ATP-dependent Clp protease ATP-binding subunit ClpX</fullName>
    </recommendedName>
</protein>
<keyword id="KW-0067">ATP-binding</keyword>
<keyword id="KW-0143">Chaperone</keyword>
<keyword id="KW-0479">Metal-binding</keyword>
<keyword id="KW-0547">Nucleotide-binding</keyword>
<keyword id="KW-0862">Zinc</keyword>
<accession>A9M020</accession>
<dbReference type="EMBL" id="CP000381">
    <property type="protein sequence ID" value="ABX73456.1"/>
    <property type="molecule type" value="Genomic_DNA"/>
</dbReference>
<dbReference type="RefSeq" id="WP_012221773.1">
    <property type="nucleotide sequence ID" value="NC_010120.1"/>
</dbReference>
<dbReference type="SMR" id="A9M020"/>
<dbReference type="KEGG" id="nmn:NMCC_1284"/>
<dbReference type="HOGENOM" id="CLU_014218_8_2_4"/>
<dbReference type="Proteomes" id="UP000001177">
    <property type="component" value="Chromosome"/>
</dbReference>
<dbReference type="GO" id="GO:0009376">
    <property type="term" value="C:HslUV protease complex"/>
    <property type="evidence" value="ECO:0007669"/>
    <property type="project" value="TreeGrafter"/>
</dbReference>
<dbReference type="GO" id="GO:0005524">
    <property type="term" value="F:ATP binding"/>
    <property type="evidence" value="ECO:0007669"/>
    <property type="project" value="UniProtKB-UniRule"/>
</dbReference>
<dbReference type="GO" id="GO:0016887">
    <property type="term" value="F:ATP hydrolysis activity"/>
    <property type="evidence" value="ECO:0007669"/>
    <property type="project" value="InterPro"/>
</dbReference>
<dbReference type="GO" id="GO:0140662">
    <property type="term" value="F:ATP-dependent protein folding chaperone"/>
    <property type="evidence" value="ECO:0007669"/>
    <property type="project" value="InterPro"/>
</dbReference>
<dbReference type="GO" id="GO:0046983">
    <property type="term" value="F:protein dimerization activity"/>
    <property type="evidence" value="ECO:0007669"/>
    <property type="project" value="InterPro"/>
</dbReference>
<dbReference type="GO" id="GO:0051082">
    <property type="term" value="F:unfolded protein binding"/>
    <property type="evidence" value="ECO:0007669"/>
    <property type="project" value="UniProtKB-UniRule"/>
</dbReference>
<dbReference type="GO" id="GO:0008270">
    <property type="term" value="F:zinc ion binding"/>
    <property type="evidence" value="ECO:0007669"/>
    <property type="project" value="InterPro"/>
</dbReference>
<dbReference type="GO" id="GO:0051301">
    <property type="term" value="P:cell division"/>
    <property type="evidence" value="ECO:0007669"/>
    <property type="project" value="TreeGrafter"/>
</dbReference>
<dbReference type="GO" id="GO:0051603">
    <property type="term" value="P:proteolysis involved in protein catabolic process"/>
    <property type="evidence" value="ECO:0007669"/>
    <property type="project" value="TreeGrafter"/>
</dbReference>
<dbReference type="CDD" id="cd19497">
    <property type="entry name" value="RecA-like_ClpX"/>
    <property type="match status" value="1"/>
</dbReference>
<dbReference type="FunFam" id="1.10.8.60:FF:000002">
    <property type="entry name" value="ATP-dependent Clp protease ATP-binding subunit ClpX"/>
    <property type="match status" value="1"/>
</dbReference>
<dbReference type="FunFam" id="3.40.50.300:FF:000005">
    <property type="entry name" value="ATP-dependent Clp protease ATP-binding subunit ClpX"/>
    <property type="match status" value="1"/>
</dbReference>
<dbReference type="Gene3D" id="1.10.8.60">
    <property type="match status" value="1"/>
</dbReference>
<dbReference type="Gene3D" id="6.20.220.10">
    <property type="entry name" value="ClpX chaperone, C4-type zinc finger domain"/>
    <property type="match status" value="1"/>
</dbReference>
<dbReference type="Gene3D" id="3.40.50.300">
    <property type="entry name" value="P-loop containing nucleotide triphosphate hydrolases"/>
    <property type="match status" value="1"/>
</dbReference>
<dbReference type="HAMAP" id="MF_00175">
    <property type="entry name" value="ClpX"/>
    <property type="match status" value="1"/>
</dbReference>
<dbReference type="InterPro" id="IPR003593">
    <property type="entry name" value="AAA+_ATPase"/>
</dbReference>
<dbReference type="InterPro" id="IPR050052">
    <property type="entry name" value="ATP-dep_Clp_protease_ClpX"/>
</dbReference>
<dbReference type="InterPro" id="IPR003959">
    <property type="entry name" value="ATPase_AAA_core"/>
</dbReference>
<dbReference type="InterPro" id="IPR019489">
    <property type="entry name" value="Clp_ATPase_C"/>
</dbReference>
<dbReference type="InterPro" id="IPR004487">
    <property type="entry name" value="Clp_protease_ATP-bd_su_ClpX"/>
</dbReference>
<dbReference type="InterPro" id="IPR046425">
    <property type="entry name" value="ClpX_bact"/>
</dbReference>
<dbReference type="InterPro" id="IPR027417">
    <property type="entry name" value="P-loop_NTPase"/>
</dbReference>
<dbReference type="InterPro" id="IPR010603">
    <property type="entry name" value="Znf_CppX_C4"/>
</dbReference>
<dbReference type="InterPro" id="IPR038366">
    <property type="entry name" value="Znf_CppX_C4_sf"/>
</dbReference>
<dbReference type="NCBIfam" id="TIGR00382">
    <property type="entry name" value="clpX"/>
    <property type="match status" value="1"/>
</dbReference>
<dbReference type="NCBIfam" id="NF003745">
    <property type="entry name" value="PRK05342.1"/>
    <property type="match status" value="1"/>
</dbReference>
<dbReference type="PANTHER" id="PTHR48102:SF7">
    <property type="entry name" value="ATP-DEPENDENT CLP PROTEASE ATP-BINDING SUBUNIT CLPX-LIKE, MITOCHONDRIAL"/>
    <property type="match status" value="1"/>
</dbReference>
<dbReference type="PANTHER" id="PTHR48102">
    <property type="entry name" value="ATP-DEPENDENT CLP PROTEASE ATP-BINDING SUBUNIT CLPX-LIKE, MITOCHONDRIAL-RELATED"/>
    <property type="match status" value="1"/>
</dbReference>
<dbReference type="Pfam" id="PF07724">
    <property type="entry name" value="AAA_2"/>
    <property type="match status" value="1"/>
</dbReference>
<dbReference type="Pfam" id="PF10431">
    <property type="entry name" value="ClpB_D2-small"/>
    <property type="match status" value="1"/>
</dbReference>
<dbReference type="Pfam" id="PF06689">
    <property type="entry name" value="zf-C4_ClpX"/>
    <property type="match status" value="1"/>
</dbReference>
<dbReference type="SMART" id="SM00382">
    <property type="entry name" value="AAA"/>
    <property type="match status" value="1"/>
</dbReference>
<dbReference type="SMART" id="SM01086">
    <property type="entry name" value="ClpB_D2-small"/>
    <property type="match status" value="1"/>
</dbReference>
<dbReference type="SMART" id="SM00994">
    <property type="entry name" value="zf-C4_ClpX"/>
    <property type="match status" value="1"/>
</dbReference>
<dbReference type="SUPFAM" id="SSF57716">
    <property type="entry name" value="Glucocorticoid receptor-like (DNA-binding domain)"/>
    <property type="match status" value="1"/>
</dbReference>
<dbReference type="SUPFAM" id="SSF52540">
    <property type="entry name" value="P-loop containing nucleoside triphosphate hydrolases"/>
    <property type="match status" value="1"/>
</dbReference>
<dbReference type="PROSITE" id="PS51902">
    <property type="entry name" value="CLPX_ZB"/>
    <property type="match status" value="1"/>
</dbReference>
<reference key="1">
    <citation type="journal article" date="2008" name="Genomics">
        <title>Characterization of ST-4821 complex, a unique Neisseria meningitidis clone.</title>
        <authorList>
            <person name="Peng J."/>
            <person name="Yang L."/>
            <person name="Yang F."/>
            <person name="Yang J."/>
            <person name="Yan Y."/>
            <person name="Nie H."/>
            <person name="Zhang X."/>
            <person name="Xiong Z."/>
            <person name="Jiang Y."/>
            <person name="Cheng F."/>
            <person name="Xu X."/>
            <person name="Chen S."/>
            <person name="Sun L."/>
            <person name="Li W."/>
            <person name="Shen Y."/>
            <person name="Shao Z."/>
            <person name="Liang X."/>
            <person name="Xu J."/>
            <person name="Jin Q."/>
        </authorList>
    </citation>
    <scope>NUCLEOTIDE SEQUENCE [LARGE SCALE GENOMIC DNA]</scope>
    <source>
        <strain>053442</strain>
    </source>
</reference>
<name>CLPX_NEIM0</name>
<evidence type="ECO:0000255" key="1">
    <source>
        <dbReference type="HAMAP-Rule" id="MF_00175"/>
    </source>
</evidence>
<evidence type="ECO:0000255" key="2">
    <source>
        <dbReference type="PROSITE-ProRule" id="PRU01250"/>
    </source>
</evidence>
<evidence type="ECO:0000256" key="3">
    <source>
        <dbReference type="SAM" id="MobiDB-lite"/>
    </source>
</evidence>